<feature type="chain" id="PRO_0000223789" description="Acetyl-coenzyme A carboxylase carboxyl transferase subunit alpha">
    <location>
        <begin position="1"/>
        <end position="319"/>
    </location>
</feature>
<feature type="domain" description="CoA carboxyltransferase C-terminal" evidence="2">
    <location>
        <begin position="39"/>
        <end position="293"/>
    </location>
</feature>
<comment type="function">
    <text evidence="1">Component of the acetyl coenzyme A carboxylase (ACC) complex. First, biotin carboxylase catalyzes the carboxylation of biotin on its carrier protein (BCCP) and then the CO(2) group is transferred by the carboxyltransferase to acetyl-CoA to form malonyl-CoA.</text>
</comment>
<comment type="catalytic activity">
    <reaction evidence="1">
        <text>N(6)-carboxybiotinyl-L-lysyl-[protein] + acetyl-CoA = N(6)-biotinyl-L-lysyl-[protein] + malonyl-CoA</text>
        <dbReference type="Rhea" id="RHEA:54728"/>
        <dbReference type="Rhea" id="RHEA-COMP:10505"/>
        <dbReference type="Rhea" id="RHEA-COMP:10506"/>
        <dbReference type="ChEBI" id="CHEBI:57288"/>
        <dbReference type="ChEBI" id="CHEBI:57384"/>
        <dbReference type="ChEBI" id="CHEBI:83144"/>
        <dbReference type="ChEBI" id="CHEBI:83145"/>
        <dbReference type="EC" id="2.1.3.15"/>
    </reaction>
</comment>
<comment type="pathway">
    <text evidence="1">Lipid metabolism; malonyl-CoA biosynthesis; malonyl-CoA from acetyl-CoA: step 1/1.</text>
</comment>
<comment type="subunit">
    <text evidence="1">Acetyl-CoA carboxylase is a heterohexamer composed of biotin carboxyl carrier protein (AccB), biotin carboxylase (AccC) and two subunits each of ACCase subunit alpha (AccA) and ACCase subunit beta (AccD).</text>
</comment>
<comment type="subcellular location">
    <subcellularLocation>
        <location evidence="1">Cytoplasm</location>
    </subcellularLocation>
</comment>
<comment type="similarity">
    <text evidence="1">Belongs to the AccA family.</text>
</comment>
<sequence>MKPVFLDFEQPIAELTNKIDELRFVQDESAVDISDEIHRLQKKSNDLTKSIFSKLTPAQISQVSRHPQRPYTLDYIEALFTDFEELHGDRHFADDYAIVGGLARFNGQSVMVVGHQKGRDTKEKIRRNFGMPRPEGYRKALRLMKTAEKFGLPVMTFIDTPGAYPGIGAEERGQSEAIGKNLYELTRLRVPVLCTVIGEGGSGGALAVAVGDYVNMLQYSTYSVISPEGCASILWKTAEKAADAAQALGITADRLQKLDLVDTVIKEPLGGAHRDFGQTMKNVKAVLEKQLHEAQSIPLADLLSRRFDRIMAYGKFSEQ</sequence>
<proteinExistence type="inferred from homology"/>
<protein>
    <recommendedName>
        <fullName evidence="1">Acetyl-coenzyme A carboxylase carboxyl transferase subunit alpha</fullName>
        <shortName evidence="1">ACCase subunit alpha</shortName>
        <shortName evidence="1">Acetyl-CoA carboxylase carboxyltransferase subunit alpha</shortName>
        <ecNumber evidence="1">2.1.3.15</ecNumber>
    </recommendedName>
</protein>
<accession>Q9JUF0</accession>
<accession>A1IRX6</accession>
<keyword id="KW-0067">ATP-binding</keyword>
<keyword id="KW-0963">Cytoplasm</keyword>
<keyword id="KW-0275">Fatty acid biosynthesis</keyword>
<keyword id="KW-0276">Fatty acid metabolism</keyword>
<keyword id="KW-0444">Lipid biosynthesis</keyword>
<keyword id="KW-0443">Lipid metabolism</keyword>
<keyword id="KW-0547">Nucleotide-binding</keyword>
<keyword id="KW-0808">Transferase</keyword>
<organism>
    <name type="scientific">Neisseria meningitidis serogroup A / serotype 4A (strain DSM 15465 / Z2491)</name>
    <dbReference type="NCBI Taxonomy" id="122587"/>
    <lineage>
        <taxon>Bacteria</taxon>
        <taxon>Pseudomonadati</taxon>
        <taxon>Pseudomonadota</taxon>
        <taxon>Betaproteobacteria</taxon>
        <taxon>Neisseriales</taxon>
        <taxon>Neisseriaceae</taxon>
        <taxon>Neisseria</taxon>
    </lineage>
</organism>
<dbReference type="EC" id="2.1.3.15" evidence="1"/>
<dbReference type="EMBL" id="AL157959">
    <property type="protein sequence ID" value="CAM08524.1"/>
    <property type="molecule type" value="Genomic_DNA"/>
</dbReference>
<dbReference type="PIR" id="H81903">
    <property type="entry name" value="H81903"/>
</dbReference>
<dbReference type="RefSeq" id="WP_002222471.1">
    <property type="nucleotide sequence ID" value="NC_003116.1"/>
</dbReference>
<dbReference type="SMR" id="Q9JUF0"/>
<dbReference type="EnsemblBacteria" id="CAM08524">
    <property type="protein sequence ID" value="CAM08524"/>
    <property type="gene ID" value="NMA1349"/>
</dbReference>
<dbReference type="KEGG" id="nma:NMA1349"/>
<dbReference type="HOGENOM" id="CLU_015486_0_2_4"/>
<dbReference type="UniPathway" id="UPA00655">
    <property type="reaction ID" value="UER00711"/>
</dbReference>
<dbReference type="Proteomes" id="UP000000626">
    <property type="component" value="Chromosome"/>
</dbReference>
<dbReference type="GO" id="GO:0009317">
    <property type="term" value="C:acetyl-CoA carboxylase complex"/>
    <property type="evidence" value="ECO:0007669"/>
    <property type="project" value="InterPro"/>
</dbReference>
<dbReference type="GO" id="GO:0003989">
    <property type="term" value="F:acetyl-CoA carboxylase activity"/>
    <property type="evidence" value="ECO:0007669"/>
    <property type="project" value="InterPro"/>
</dbReference>
<dbReference type="GO" id="GO:0005524">
    <property type="term" value="F:ATP binding"/>
    <property type="evidence" value="ECO:0007669"/>
    <property type="project" value="UniProtKB-KW"/>
</dbReference>
<dbReference type="GO" id="GO:0016743">
    <property type="term" value="F:carboxyl- or carbamoyltransferase activity"/>
    <property type="evidence" value="ECO:0007669"/>
    <property type="project" value="UniProtKB-UniRule"/>
</dbReference>
<dbReference type="GO" id="GO:0006633">
    <property type="term" value="P:fatty acid biosynthetic process"/>
    <property type="evidence" value="ECO:0007669"/>
    <property type="project" value="UniProtKB-KW"/>
</dbReference>
<dbReference type="GO" id="GO:2001295">
    <property type="term" value="P:malonyl-CoA biosynthetic process"/>
    <property type="evidence" value="ECO:0007669"/>
    <property type="project" value="UniProtKB-UniRule"/>
</dbReference>
<dbReference type="Gene3D" id="3.90.226.10">
    <property type="entry name" value="2-enoyl-CoA Hydratase, Chain A, domain 1"/>
    <property type="match status" value="1"/>
</dbReference>
<dbReference type="HAMAP" id="MF_00823">
    <property type="entry name" value="AcetylCoA_CT_alpha"/>
    <property type="match status" value="1"/>
</dbReference>
<dbReference type="InterPro" id="IPR001095">
    <property type="entry name" value="Acetyl_CoA_COase_a_su"/>
</dbReference>
<dbReference type="InterPro" id="IPR029045">
    <property type="entry name" value="ClpP/crotonase-like_dom_sf"/>
</dbReference>
<dbReference type="InterPro" id="IPR011763">
    <property type="entry name" value="COA_CT_C"/>
</dbReference>
<dbReference type="NCBIfam" id="TIGR00513">
    <property type="entry name" value="accA"/>
    <property type="match status" value="1"/>
</dbReference>
<dbReference type="NCBIfam" id="NF041504">
    <property type="entry name" value="AccA_sub"/>
    <property type="match status" value="1"/>
</dbReference>
<dbReference type="NCBIfam" id="NF004344">
    <property type="entry name" value="PRK05724.1"/>
    <property type="match status" value="1"/>
</dbReference>
<dbReference type="PANTHER" id="PTHR42853">
    <property type="entry name" value="ACETYL-COENZYME A CARBOXYLASE CARBOXYL TRANSFERASE SUBUNIT ALPHA"/>
    <property type="match status" value="1"/>
</dbReference>
<dbReference type="PANTHER" id="PTHR42853:SF3">
    <property type="entry name" value="ACETYL-COENZYME A CARBOXYLASE CARBOXYL TRANSFERASE SUBUNIT ALPHA, CHLOROPLASTIC"/>
    <property type="match status" value="1"/>
</dbReference>
<dbReference type="Pfam" id="PF03255">
    <property type="entry name" value="ACCA"/>
    <property type="match status" value="1"/>
</dbReference>
<dbReference type="PRINTS" id="PR01069">
    <property type="entry name" value="ACCCTRFRASEA"/>
</dbReference>
<dbReference type="SUPFAM" id="SSF52096">
    <property type="entry name" value="ClpP/crotonase"/>
    <property type="match status" value="1"/>
</dbReference>
<dbReference type="PROSITE" id="PS50989">
    <property type="entry name" value="COA_CT_CTER"/>
    <property type="match status" value="1"/>
</dbReference>
<evidence type="ECO:0000255" key="1">
    <source>
        <dbReference type="HAMAP-Rule" id="MF_00823"/>
    </source>
</evidence>
<evidence type="ECO:0000255" key="2">
    <source>
        <dbReference type="PROSITE-ProRule" id="PRU01137"/>
    </source>
</evidence>
<name>ACCA_NEIMA</name>
<gene>
    <name evidence="1" type="primary">accA</name>
    <name type="ordered locus">NMA1349</name>
</gene>
<reference key="1">
    <citation type="journal article" date="2000" name="Nature">
        <title>Complete DNA sequence of a serogroup A strain of Neisseria meningitidis Z2491.</title>
        <authorList>
            <person name="Parkhill J."/>
            <person name="Achtman M."/>
            <person name="James K.D."/>
            <person name="Bentley S.D."/>
            <person name="Churcher C.M."/>
            <person name="Klee S.R."/>
            <person name="Morelli G."/>
            <person name="Basham D."/>
            <person name="Brown D."/>
            <person name="Chillingworth T."/>
            <person name="Davies R.M."/>
            <person name="Davis P."/>
            <person name="Devlin K."/>
            <person name="Feltwell T."/>
            <person name="Hamlin N."/>
            <person name="Holroyd S."/>
            <person name="Jagels K."/>
            <person name="Leather S."/>
            <person name="Moule S."/>
            <person name="Mungall K.L."/>
            <person name="Quail M.A."/>
            <person name="Rajandream M.A."/>
            <person name="Rutherford K.M."/>
            <person name="Simmonds M."/>
            <person name="Skelton J."/>
            <person name="Whitehead S."/>
            <person name="Spratt B.G."/>
            <person name="Barrell B.G."/>
        </authorList>
    </citation>
    <scope>NUCLEOTIDE SEQUENCE [LARGE SCALE GENOMIC DNA]</scope>
    <source>
        <strain>DSM 15465 / Z2491</strain>
    </source>
</reference>